<evidence type="ECO:0000255" key="1"/>
<evidence type="ECO:0000256" key="2">
    <source>
        <dbReference type="SAM" id="MobiDB-lite"/>
    </source>
</evidence>
<evidence type="ECO:0000269" key="3">
    <source>
    </source>
</evidence>
<evidence type="ECO:0000305" key="4"/>
<evidence type="ECO:0007744" key="5">
    <source>
    </source>
</evidence>
<evidence type="ECO:0007744" key="6">
    <source>
    </source>
</evidence>
<evidence type="ECO:0007744" key="7">
    <source>
    </source>
</evidence>
<organism>
    <name type="scientific">Saccharomyces cerevisiae (strain ATCC 204508 / S288c)</name>
    <name type="common">Baker's yeast</name>
    <dbReference type="NCBI Taxonomy" id="559292"/>
    <lineage>
        <taxon>Eukaryota</taxon>
        <taxon>Fungi</taxon>
        <taxon>Dikarya</taxon>
        <taxon>Ascomycota</taxon>
        <taxon>Saccharomycotina</taxon>
        <taxon>Saccharomycetes</taxon>
        <taxon>Saccharomycetales</taxon>
        <taxon>Saccharomycetaceae</taxon>
        <taxon>Saccharomyces</taxon>
    </lineage>
</organism>
<accession>P25639</accession>
<accession>D6VR66</accession>
<accession>P25363</accession>
<accession>Q8NIL7</accession>
<sequence length="631" mass="70922">MVRFVSILSLFGCAATLVTAHDDMDMDMDMDMDMDMNIDTTTSQSIDVSSTASIVPVPHEPKHLHGLPILQSPSLTPAERLYWENYNTTTYFTTQAGNRSALRYHIITLLLVAFVLYPVSLALSAARSRWYLPLLFVNLCICISSVMALSVFKNTFPEEDWYAHNIYGTTSVLLLVFMLVHFFAAVLSVPVSLASKKEYRPVDTIPLNDLESTPVMVNSARGSPSPSSNRDTLFSLSSDTTTATATNNNKRRRAEGEDEGDNTSNHDTLRDEDYDNDDDEIASIEAPPLLPQDIPVFRILFTNTKYQMLAAHLSCVANVVFHMLTYPLFMYIFVDLIIGFAVGNLLGKGIRIFNLLAHWIKGGVFFTLGVVSLARYCGFAAKYGWAWNNISFTSQLTQTRSSNLLFRFAPAGTFTMEFVESFLIFFYGSTNIFLEHLAGNGGAWTAKDLQHVSIAFMFIGTGLCGLLTEYKLNHWRFEHARKRPQTDVVAATPGYSPNPFPAFTIFWTGILMSQHAQSSQFSTTIHTQWGYLLSYGSFFRLLTFLILFLVPNTNSAASKPFTELITSFCLLCGGLVFMESTDQSIEAMEYRGFTPMFTFNLSVGFVSLLMAWEMILFIWKDWLIKTRKTSL</sequence>
<reference key="1">
    <citation type="journal article" date="1992" name="Nature">
        <title>The complete DNA sequence of yeast chromosome III.</title>
        <authorList>
            <person name="Oliver S.G."/>
            <person name="van der Aart Q.J.M."/>
            <person name="Agostoni-Carbone M.L."/>
            <person name="Aigle M."/>
            <person name="Alberghina L."/>
            <person name="Alexandraki D."/>
            <person name="Antoine G."/>
            <person name="Anwar R."/>
            <person name="Ballesta J.P.G."/>
            <person name="Benit P."/>
            <person name="Berben G."/>
            <person name="Bergantino E."/>
            <person name="Biteau N."/>
            <person name="Bolle P.-A."/>
            <person name="Bolotin-Fukuhara M."/>
            <person name="Brown A."/>
            <person name="Brown A.J.P."/>
            <person name="Buhler J.-M."/>
            <person name="Carcano C."/>
            <person name="Carignani G."/>
            <person name="Cederberg H."/>
            <person name="Chanet R."/>
            <person name="Contreras R."/>
            <person name="Crouzet M."/>
            <person name="Daignan-Fornier B."/>
            <person name="Defoor E."/>
            <person name="Delgado M.D."/>
            <person name="Demolder J."/>
            <person name="Doira C."/>
            <person name="Dubois E."/>
            <person name="Dujon B."/>
            <person name="Duesterhoeft A."/>
            <person name="Erdmann D."/>
            <person name="Esteban M."/>
            <person name="Fabre F."/>
            <person name="Fairhead C."/>
            <person name="Faye G."/>
            <person name="Feldmann H."/>
            <person name="Fiers W."/>
            <person name="Francingues-Gaillard M.-C."/>
            <person name="Franco L."/>
            <person name="Frontali L."/>
            <person name="Fukuhara H."/>
            <person name="Fuller L.J."/>
            <person name="Galland P."/>
            <person name="Gent M.E."/>
            <person name="Gigot D."/>
            <person name="Gilliquet V."/>
            <person name="Glansdorff N."/>
            <person name="Goffeau A."/>
            <person name="Grenson M."/>
            <person name="Grisanti P."/>
            <person name="Grivell L.A."/>
            <person name="de Haan M."/>
            <person name="Haasemann M."/>
            <person name="Hatat D."/>
            <person name="Hoenicka J."/>
            <person name="Hegemann J.H."/>
            <person name="Herbert C.J."/>
            <person name="Hilger F."/>
            <person name="Hohmann S."/>
            <person name="Hollenberg C.P."/>
            <person name="Huse K."/>
            <person name="Iborra F."/>
            <person name="Indge K.J."/>
            <person name="Isono K."/>
            <person name="Jacq C."/>
            <person name="Jacquet M."/>
            <person name="James C.M."/>
            <person name="Jauniaux J.-C."/>
            <person name="Jia Y."/>
            <person name="Jimenez A."/>
            <person name="Kelly A."/>
            <person name="Kleinhans U."/>
            <person name="Kreisl P."/>
            <person name="Lanfranchi G."/>
            <person name="Lewis C."/>
            <person name="van der Linden C.G."/>
            <person name="Lucchini G."/>
            <person name="Lutzenkirchen K."/>
            <person name="Maat M.J."/>
            <person name="Mallet L."/>
            <person name="Mannhaupt G."/>
            <person name="Martegani E."/>
            <person name="Mathieu A."/>
            <person name="Maurer C.T.C."/>
            <person name="McConnell D."/>
            <person name="McKee R.A."/>
            <person name="Messenguy F."/>
            <person name="Mewes H.-W."/>
            <person name="Molemans F."/>
            <person name="Montague M.A."/>
            <person name="Muzi Falconi M."/>
            <person name="Navas L."/>
            <person name="Newlon C.S."/>
            <person name="Noone D."/>
            <person name="Pallier C."/>
            <person name="Panzeri L."/>
            <person name="Pearson B.M."/>
            <person name="Perea J."/>
            <person name="Philippsen P."/>
            <person name="Pierard A."/>
            <person name="Planta R.J."/>
            <person name="Plevani P."/>
            <person name="Poetsch B."/>
            <person name="Pohl F.M."/>
            <person name="Purnelle B."/>
            <person name="Ramezani Rad M."/>
            <person name="Rasmussen S.W."/>
            <person name="Raynal A."/>
            <person name="Remacha M.A."/>
            <person name="Richterich P."/>
            <person name="Roberts A.B."/>
            <person name="Rodriguez F."/>
            <person name="Sanz E."/>
            <person name="Schaaff-Gerstenschlaeger I."/>
            <person name="Scherens B."/>
            <person name="Schweitzer B."/>
            <person name="Shu Y."/>
            <person name="Skala J."/>
            <person name="Slonimski P.P."/>
            <person name="Sor F."/>
            <person name="Soustelle C."/>
            <person name="Spiegelberg R."/>
            <person name="Stateva L.I."/>
            <person name="Steensma H.Y."/>
            <person name="Steiner S."/>
            <person name="Thierry A."/>
            <person name="Thireos G."/>
            <person name="Tzermia M."/>
            <person name="Urrestarazu L.A."/>
            <person name="Valle G."/>
            <person name="Vetter I."/>
            <person name="van Vliet-Reedijk J.C."/>
            <person name="Voet M."/>
            <person name="Volckaert G."/>
            <person name="Vreken P."/>
            <person name="Wang H."/>
            <person name="Warmington J.R."/>
            <person name="von Wettstein D."/>
            <person name="Wicksteed B.L."/>
            <person name="Wilson C."/>
            <person name="Wurst H."/>
            <person name="Xu G."/>
            <person name="Yoshikawa A."/>
            <person name="Zimmermann F.K."/>
            <person name="Sgouros J.G."/>
        </authorList>
    </citation>
    <scope>NUCLEOTIDE SEQUENCE [LARGE SCALE GENOMIC DNA]</scope>
    <source>
        <strain>ATCC 204508 / S288c</strain>
    </source>
</reference>
<reference key="2">
    <citation type="submission" date="2001-06" db="EMBL/GenBank/DDBJ databases">
        <authorList>
            <person name="Valles G."/>
            <person name="Volckaerts G."/>
        </authorList>
    </citation>
    <scope>SEQUENCE REVISION</scope>
</reference>
<reference key="3">
    <citation type="journal article" date="2014" name="G3 (Bethesda)">
        <title>The reference genome sequence of Saccharomyces cerevisiae: Then and now.</title>
        <authorList>
            <person name="Engel S.R."/>
            <person name="Dietrich F.S."/>
            <person name="Fisk D.G."/>
            <person name="Binkley G."/>
            <person name="Balakrishnan R."/>
            <person name="Costanzo M.C."/>
            <person name="Dwight S.S."/>
            <person name="Hitz B.C."/>
            <person name="Karra K."/>
            <person name="Nash R.S."/>
            <person name="Weng S."/>
            <person name="Wong E.D."/>
            <person name="Lloyd P."/>
            <person name="Skrzypek M.S."/>
            <person name="Miyasato S.R."/>
            <person name="Simison M."/>
            <person name="Cherry J.M."/>
        </authorList>
    </citation>
    <scope>GENOME REANNOTATION</scope>
    <source>
        <strain>ATCC 204508 / S288c</strain>
    </source>
</reference>
<reference key="4">
    <citation type="journal article" date="1992" name="Yeast">
        <title>Sequence of the sup61-RAD18 region on chromosome III of Saccharomyces cerevisiae.</title>
        <authorList>
            <person name="Benit P."/>
            <person name="Chanet R."/>
            <person name="Fabre F."/>
            <person name="Faye G."/>
            <person name="Fukuhara H."/>
            <person name="Sor F."/>
        </authorList>
    </citation>
    <scope>NUCLEOTIDE SEQUENCE [GENOMIC DNA] OF 512-631</scope>
</reference>
<reference key="5">
    <citation type="journal article" date="2007" name="Genome Res.">
        <title>Approaching a complete repository of sequence-verified protein-encoding clones for Saccharomyces cerevisiae.</title>
        <authorList>
            <person name="Hu Y."/>
            <person name="Rolfs A."/>
            <person name="Bhullar B."/>
            <person name="Murthy T.V.S."/>
            <person name="Zhu C."/>
            <person name="Berger M.F."/>
            <person name="Camargo A.A."/>
            <person name="Kelley F."/>
            <person name="McCarron S."/>
            <person name="Jepson D."/>
            <person name="Richardson A."/>
            <person name="Raphael J."/>
            <person name="Moreira D."/>
            <person name="Taycher E."/>
            <person name="Zuo D."/>
            <person name="Mohr S."/>
            <person name="Kane M.F."/>
            <person name="Williamson J."/>
            <person name="Simpson A.J.G."/>
            <person name="Bulyk M.L."/>
            <person name="Harlow E."/>
            <person name="Marsischky G."/>
            <person name="Kolodner R.D."/>
            <person name="LaBaer J."/>
        </authorList>
    </citation>
    <scope>NUCLEOTIDE SEQUENCE [GENOMIC DNA] OF 512-631</scope>
    <source>
        <strain>ATCC 204508 / S288c</strain>
    </source>
</reference>
<reference key="6">
    <citation type="journal article" date="2003" name="Nature">
        <title>Global analysis of protein localization in budding yeast.</title>
        <authorList>
            <person name="Huh W.-K."/>
            <person name="Falvo J.V."/>
            <person name="Gerke L.C."/>
            <person name="Carroll A.S."/>
            <person name="Howson R.W."/>
            <person name="Weissman J.S."/>
            <person name="O'Shea E.K."/>
        </authorList>
    </citation>
    <scope>SUBCELLULAR LOCATION [LARGE SCALE ANALYSIS]</scope>
</reference>
<reference key="7">
    <citation type="journal article" date="2006" name="Proc. Natl. Acad. Sci. U.S.A.">
        <title>A global topology map of the Saccharomyces cerevisiae membrane proteome.</title>
        <authorList>
            <person name="Kim H."/>
            <person name="Melen K."/>
            <person name="Oesterberg M."/>
            <person name="von Heijne G."/>
        </authorList>
    </citation>
    <scope>TOPOLOGY [LARGE SCALE ANALYSIS]</scope>
    <source>
        <strain>ATCC 208353 / W303-1A</strain>
    </source>
</reference>
<reference key="8">
    <citation type="journal article" date="2008" name="Mol. Cell. Proteomics">
        <title>A multidimensional chromatography technology for in-depth phosphoproteome analysis.</title>
        <authorList>
            <person name="Albuquerque C.P."/>
            <person name="Smolka M.B."/>
            <person name="Payne S.H."/>
            <person name="Bafna V."/>
            <person name="Eng J."/>
            <person name="Zhou H."/>
        </authorList>
    </citation>
    <scope>PHOSPHORYLATION [LARGE SCALE ANALYSIS] AT SER-219</scope>
    <scope>IDENTIFICATION BY MASS SPECTROMETRY [LARGE SCALE ANALYSIS]</scope>
</reference>
<reference key="9">
    <citation type="journal article" date="2009" name="Science">
        <title>Global analysis of Cdk1 substrate phosphorylation sites provides insights into evolution.</title>
        <authorList>
            <person name="Holt L.J."/>
            <person name="Tuch B.B."/>
            <person name="Villen J."/>
            <person name="Johnson A.D."/>
            <person name="Gygi S.P."/>
            <person name="Morgan D.O."/>
        </authorList>
    </citation>
    <scope>PHOSPHORYLATION [LARGE SCALE ANALYSIS] AT SER-219</scope>
    <scope>IDENTIFICATION BY MASS SPECTROMETRY [LARGE SCALE ANALYSIS]</scope>
</reference>
<reference key="10">
    <citation type="journal article" date="2012" name="Proteomics">
        <title>Sites of ubiquitin attachment in Saccharomyces cerevisiae.</title>
        <authorList>
            <person name="Starita L.M."/>
            <person name="Lo R.S."/>
            <person name="Eng J.K."/>
            <person name="von Haller P.D."/>
            <person name="Fields S."/>
        </authorList>
    </citation>
    <scope>UBIQUITINATION [LARGE SCALE ANALYSIS] AT LYS-250</scope>
    <scope>IDENTIFICATION BY MASS SPECTROMETRY [LARGE SCALE ANALYSIS]</scope>
</reference>
<protein>
    <recommendedName>
        <fullName>Uncharacterized membrane protein YCR061W</fullName>
    </recommendedName>
</protein>
<gene>
    <name type="ordered locus">YCR061W</name>
    <name type="ORF">YCR062W</name>
    <name type="ORF">YCR61W</name>
    <name type="ORF">YCR62W</name>
    <name type="ORF">YCR904</name>
</gene>
<feature type="signal peptide" evidence="1">
    <location>
        <begin position="1"/>
        <end position="20"/>
    </location>
</feature>
<feature type="chain" id="PRO_0000014313" description="Uncharacterized membrane protein YCR061W">
    <location>
        <begin position="21"/>
        <end position="631"/>
    </location>
</feature>
<feature type="topological domain" description="Lumenal" evidence="1">
    <location>
        <begin position="21"/>
        <end position="105"/>
    </location>
</feature>
<feature type="transmembrane region" description="Helical" evidence="1">
    <location>
        <begin position="106"/>
        <end position="126"/>
    </location>
</feature>
<feature type="topological domain" description="Cytoplasmic" evidence="1">
    <location>
        <begin position="127"/>
        <end position="131"/>
    </location>
</feature>
<feature type="transmembrane region" description="Helical" evidence="1">
    <location>
        <begin position="132"/>
        <end position="152"/>
    </location>
</feature>
<feature type="topological domain" description="Lumenal" evidence="1">
    <location>
        <begin position="153"/>
        <end position="170"/>
    </location>
</feature>
<feature type="transmembrane region" description="Helical" evidence="1">
    <location>
        <begin position="171"/>
        <end position="191"/>
    </location>
</feature>
<feature type="topological domain" description="Cytoplasmic" evidence="1">
    <location>
        <begin position="192"/>
        <end position="322"/>
    </location>
</feature>
<feature type="transmembrane region" description="Helical" evidence="1">
    <location>
        <begin position="323"/>
        <end position="343"/>
    </location>
</feature>
<feature type="topological domain" description="Lumenal" evidence="1">
    <location>
        <begin position="344"/>
        <end position="351"/>
    </location>
</feature>
<feature type="transmembrane region" description="Helical" evidence="1">
    <location>
        <begin position="352"/>
        <end position="372"/>
    </location>
</feature>
<feature type="topological domain" description="Cytoplasmic" evidence="1">
    <location>
        <begin position="373"/>
        <end position="407"/>
    </location>
</feature>
<feature type="transmembrane region" description="Helical" evidence="1">
    <location>
        <begin position="408"/>
        <end position="428"/>
    </location>
</feature>
<feature type="topological domain" description="Lumenal" evidence="1">
    <location>
        <begin position="429"/>
        <end position="451"/>
    </location>
</feature>
<feature type="transmembrane region" description="Helical" evidence="1">
    <location>
        <begin position="452"/>
        <end position="472"/>
    </location>
</feature>
<feature type="topological domain" description="Cytoplasmic" evidence="1">
    <location>
        <begin position="473"/>
        <end position="529"/>
    </location>
</feature>
<feature type="transmembrane region" description="Helical" evidence="1">
    <location>
        <begin position="530"/>
        <end position="550"/>
    </location>
</feature>
<feature type="topological domain" description="Lumenal" evidence="1">
    <location>
        <begin position="551"/>
        <end position="598"/>
    </location>
</feature>
<feature type="transmembrane region" description="Helical" evidence="1">
    <location>
        <begin position="599"/>
        <end position="619"/>
    </location>
</feature>
<feature type="topological domain" description="Cytoplasmic" evidence="1">
    <location>
        <begin position="620"/>
        <end position="631"/>
    </location>
</feature>
<feature type="region of interest" description="Disordered" evidence="2">
    <location>
        <begin position="216"/>
        <end position="274"/>
    </location>
</feature>
<feature type="compositionally biased region" description="Polar residues" evidence="2">
    <location>
        <begin position="220"/>
        <end position="239"/>
    </location>
</feature>
<feature type="modified residue" description="Phosphoserine" evidence="5 6">
    <location>
        <position position="219"/>
    </location>
</feature>
<feature type="glycosylation site" description="N-linked (GlcNAc...) asparagine" evidence="1">
    <location>
        <position position="87"/>
    </location>
</feature>
<feature type="glycosylation site" description="N-linked (GlcNAc...) asparagine" evidence="1">
    <location>
        <position position="98"/>
    </location>
</feature>
<feature type="cross-link" description="Glycyl lysine isopeptide (Lys-Gly) (interchain with G-Cter in ubiquitin)" evidence="7">
    <location>
        <position position="250"/>
    </location>
</feature>
<dbReference type="EMBL" id="X59720">
    <property type="protein sequence ID" value="CAC42986.1"/>
    <property type="molecule type" value="Genomic_DNA"/>
</dbReference>
<dbReference type="EMBL" id="AY693356">
    <property type="protein sequence ID" value="AAT93375.1"/>
    <property type="molecule type" value="Genomic_DNA"/>
</dbReference>
<dbReference type="EMBL" id="BK006937">
    <property type="protein sequence ID" value="DAA07535.1"/>
    <property type="molecule type" value="Genomic_DNA"/>
</dbReference>
<dbReference type="PIR" id="S19476">
    <property type="entry name" value="S19476"/>
</dbReference>
<dbReference type="PIR" id="S19477">
    <property type="entry name" value="S19477"/>
</dbReference>
<dbReference type="RefSeq" id="NP_009987.2">
    <property type="nucleotide sequence ID" value="NM_001178772.1"/>
</dbReference>
<dbReference type="SMR" id="P25639"/>
<dbReference type="BioGRID" id="31038">
    <property type="interactions" value="169"/>
</dbReference>
<dbReference type="DIP" id="DIP-8245N"/>
<dbReference type="FunCoup" id="P25639">
    <property type="interactions" value="24"/>
</dbReference>
<dbReference type="IntAct" id="P25639">
    <property type="interactions" value="23"/>
</dbReference>
<dbReference type="MINT" id="P25639"/>
<dbReference type="STRING" id="4932.YCR061W"/>
<dbReference type="GlyGen" id="P25639">
    <property type="glycosylation" value="3 sites"/>
</dbReference>
<dbReference type="iPTMnet" id="P25639"/>
<dbReference type="PaxDb" id="4932-YCR061W"/>
<dbReference type="PeptideAtlas" id="P25639"/>
<dbReference type="EnsemblFungi" id="YCR061W_mRNA">
    <property type="protein sequence ID" value="YCR061W"/>
    <property type="gene ID" value="YCR061W"/>
</dbReference>
<dbReference type="GeneID" id="850425"/>
<dbReference type="KEGG" id="sce:YCR061W"/>
<dbReference type="AGR" id="SGD:S000000657"/>
<dbReference type="SGD" id="S000000657">
    <property type="gene designation" value="YCR061W"/>
</dbReference>
<dbReference type="VEuPathDB" id="FungiDB:YCR061W"/>
<dbReference type="eggNOG" id="ENOG502QW3E">
    <property type="taxonomic scope" value="Eukaryota"/>
</dbReference>
<dbReference type="GeneTree" id="ENSGT00940000176688"/>
<dbReference type="HOGENOM" id="CLU_012543_1_0_1"/>
<dbReference type="InParanoid" id="P25639"/>
<dbReference type="OMA" id="NKGWAWN"/>
<dbReference type="OrthoDB" id="4005299at2759"/>
<dbReference type="BioCyc" id="YEAST:G3O-29366-MONOMER"/>
<dbReference type="BioGRID-ORCS" id="850425">
    <property type="hits" value="2 hits in 10 CRISPR screens"/>
</dbReference>
<dbReference type="PRO" id="PR:P25639"/>
<dbReference type="Proteomes" id="UP000002311">
    <property type="component" value="Chromosome III"/>
</dbReference>
<dbReference type="RNAct" id="P25639">
    <property type="molecule type" value="protein"/>
</dbReference>
<dbReference type="GO" id="GO:0005737">
    <property type="term" value="C:cytoplasm"/>
    <property type="evidence" value="ECO:0007005"/>
    <property type="project" value="SGD"/>
</dbReference>
<dbReference type="GO" id="GO:0016020">
    <property type="term" value="C:membrane"/>
    <property type="evidence" value="ECO:0007669"/>
    <property type="project" value="UniProtKB-SubCell"/>
</dbReference>
<dbReference type="GO" id="GO:0008361">
    <property type="term" value="P:regulation of cell size"/>
    <property type="evidence" value="ECO:0007001"/>
    <property type="project" value="SGD"/>
</dbReference>
<dbReference type="InterPro" id="IPR018825">
    <property type="entry name" value="DUF2427"/>
</dbReference>
<dbReference type="InterPro" id="IPR018827">
    <property type="entry name" value="YTP1_C"/>
</dbReference>
<dbReference type="PANTHER" id="PTHR31685:SF3">
    <property type="entry name" value="INTEGRAL MEMBRANE PROTEIN (AFU_ORTHOLOGUE AFUA_6G12730)"/>
    <property type="match status" value="1"/>
</dbReference>
<dbReference type="PANTHER" id="PTHR31685">
    <property type="entry name" value="INTEGRAL MEMBRANE PROTEIN (AFU_ORTHOLOGUE AFUA_6G12730)-RELATED"/>
    <property type="match status" value="1"/>
</dbReference>
<dbReference type="Pfam" id="PF10348">
    <property type="entry name" value="DUF2427"/>
    <property type="match status" value="1"/>
</dbReference>
<dbReference type="Pfam" id="PF10355">
    <property type="entry name" value="Ytp1"/>
    <property type="match status" value="1"/>
</dbReference>
<name>YCV1_YEAST</name>
<proteinExistence type="evidence at protein level"/>
<comment type="subcellular location">
    <subcellularLocation>
        <location evidence="3">Membrane</location>
        <topology evidence="3">Multi-pass membrane protein</topology>
    </subcellularLocation>
    <text>Localizes to cytoplasmic punctate structures.</text>
</comment>
<comment type="similarity">
    <text evidence="4">To S.pombe SpBC3B8.06.</text>
</comment>
<keyword id="KW-0325">Glycoprotein</keyword>
<keyword id="KW-1017">Isopeptide bond</keyword>
<keyword id="KW-0472">Membrane</keyword>
<keyword id="KW-0597">Phosphoprotein</keyword>
<keyword id="KW-1185">Reference proteome</keyword>
<keyword id="KW-0732">Signal</keyword>
<keyword id="KW-0812">Transmembrane</keyword>
<keyword id="KW-1133">Transmembrane helix</keyword>
<keyword id="KW-0832">Ubl conjugation</keyword>